<organism>
    <name type="scientific">Conus pennaceus</name>
    <name type="common">Feathered cone</name>
    <name type="synonym">Conus episcopus</name>
    <dbReference type="NCBI Taxonomy" id="37335"/>
    <lineage>
        <taxon>Eukaryota</taxon>
        <taxon>Metazoa</taxon>
        <taxon>Spiralia</taxon>
        <taxon>Lophotrochozoa</taxon>
        <taxon>Mollusca</taxon>
        <taxon>Gastropoda</taxon>
        <taxon>Caenogastropoda</taxon>
        <taxon>Neogastropoda</taxon>
        <taxon>Conoidea</taxon>
        <taxon>Conidae</taxon>
        <taxon>Conus</taxon>
        <taxon>Darioconus</taxon>
    </lineage>
</organism>
<sequence length="63" mass="7163">MRCFPVFIILLLLMASAPSFDARPKTEDDVPLSSFRDNLKRTLRTLLDPRRCCYETPGCCVIG</sequence>
<feature type="signal peptide" evidence="2">
    <location>
        <begin position="1"/>
        <end position="22"/>
    </location>
</feature>
<feature type="propeptide" id="PRO_0000274086" evidence="1">
    <location>
        <begin position="23"/>
        <end position="49"/>
    </location>
</feature>
<feature type="peptide" id="PRO_0000274087" description="Conotoxin Pn-B01411">
    <location>
        <begin position="52"/>
        <end position="62"/>
    </location>
</feature>
<feature type="modified residue" description="Isoleucine amide" evidence="1">
    <location>
        <position position="62"/>
    </location>
</feature>
<dbReference type="EMBL" id="AF214983">
    <property type="protein sequence ID" value="AAG60411.1"/>
    <property type="molecule type" value="mRNA"/>
</dbReference>
<dbReference type="ConoServer" id="670">
    <property type="toxin name" value="Pn-B01411 precursor"/>
</dbReference>
<dbReference type="GO" id="GO:0005576">
    <property type="term" value="C:extracellular region"/>
    <property type="evidence" value="ECO:0007669"/>
    <property type="project" value="UniProtKB-SubCell"/>
</dbReference>
<dbReference type="GO" id="GO:0090729">
    <property type="term" value="F:toxin activity"/>
    <property type="evidence" value="ECO:0007669"/>
    <property type="project" value="UniProtKB-KW"/>
</dbReference>
<dbReference type="InterPro" id="IPR031565">
    <property type="entry name" value="T-conotoxin"/>
</dbReference>
<dbReference type="Pfam" id="PF16981">
    <property type="entry name" value="Chi-conotoxin"/>
    <property type="match status" value="1"/>
</dbReference>
<evidence type="ECO:0000250" key="1"/>
<evidence type="ECO:0000255" key="2"/>
<evidence type="ECO:0000303" key="3">
    <source>
    </source>
</evidence>
<evidence type="ECO:0000305" key="4"/>
<evidence type="ECO:0000305" key="5">
    <source>
    </source>
</evidence>
<comment type="subcellular location">
    <subcellularLocation>
        <location evidence="5">Secreted</location>
    </subcellularLocation>
</comment>
<comment type="tissue specificity">
    <text evidence="5">Expressed by the venom duct.</text>
</comment>
<comment type="domain">
    <text evidence="4">The cysteine framework is V (CC-CC).</text>
</comment>
<comment type="PTM">
    <text evidence="4">Contains 2 disulfide bonds that can be either 'C1-C3, C2-C4' or 'C1-C4, C2-C3', since these disulfide connectivities have been observed for conotoxins with cysteine framework V (for examples, see AC P0DQQ7 and AC P81755).</text>
</comment>
<comment type="similarity">
    <text evidence="4">Belongs to the conotoxin T superfamily.</text>
</comment>
<reference key="1">
    <citation type="journal article" date="2001" name="Mol. Biol. Evol.">
        <title>Mechanisms for evolving hypervariability: the case of conopeptides.</title>
        <authorList>
            <person name="Conticello S.G."/>
            <person name="Gilad Y."/>
            <person name="Avidan N."/>
            <person name="Ben-Asher E."/>
            <person name="Levy Z."/>
            <person name="Fainzilber M."/>
        </authorList>
    </citation>
    <scope>NUCLEOTIDE SEQUENCE [MRNA]</scope>
    <source>
        <tissue>Venom duct</tissue>
    </source>
</reference>
<name>CT411_CONPE</name>
<protein>
    <recommendedName>
        <fullName evidence="3">Conotoxin Pn-B01411</fullName>
    </recommendedName>
</protein>
<keyword id="KW-0027">Amidation</keyword>
<keyword id="KW-0165">Cleavage on pair of basic residues</keyword>
<keyword id="KW-1015">Disulfide bond</keyword>
<keyword id="KW-0964">Secreted</keyword>
<keyword id="KW-0732">Signal</keyword>
<keyword id="KW-0800">Toxin</keyword>
<accession>Q9BPE7</accession>
<proteinExistence type="inferred from homology"/>